<dbReference type="EMBL" id="AJ439607">
    <property type="protein sequence ID" value="CAD28791.1"/>
    <property type="molecule type" value="Genomic_DNA"/>
</dbReference>
<dbReference type="RefSeq" id="WP_025206073.1">
    <property type="nucleotide sequence ID" value="NZ_CP007033.1"/>
</dbReference>
<dbReference type="SMR" id="Q8GJ26"/>
<dbReference type="KEGG" id="drs:DEHRE_12140"/>
<dbReference type="GO" id="GO:0005886">
    <property type="term" value="C:plasma membrane"/>
    <property type="evidence" value="ECO:0007669"/>
    <property type="project" value="UniProtKB-SubCell"/>
</dbReference>
<comment type="function">
    <text evidence="4">May act as a membrane anchor for the tetrachloroethene reductive dehalogenase PceA.</text>
</comment>
<comment type="subcellular location">
    <subcellularLocation>
        <location evidence="3">Cell membrane</location>
        <topology evidence="1">Multi-pass membrane protein</topology>
    </subcellularLocation>
</comment>
<comment type="similarity">
    <text evidence="3">Belongs to the PceB family.</text>
</comment>
<name>PCEB_DEHRP</name>
<proteinExistence type="inferred from homology"/>
<accession>Q8GJ26</accession>
<evidence type="ECO:0000255" key="1"/>
<evidence type="ECO:0000303" key="2">
    <source>
    </source>
</evidence>
<evidence type="ECO:0000305" key="3"/>
<evidence type="ECO:0000305" key="4">
    <source>
    </source>
</evidence>
<reference key="1">
    <citation type="journal article" date="2003" name="Appl. Environ. Microbiol.">
        <title>Characterization of the corrinoid iron-sulfur protein tetrachloroethene reductive dehalogenase of Dehalobacter restrictus.</title>
        <authorList>
            <person name="Maillard J."/>
            <person name="Schumacher W."/>
            <person name="Vazquez F."/>
            <person name="Regeard C."/>
            <person name="Hagen W.R."/>
            <person name="Holliger C."/>
        </authorList>
    </citation>
    <scope>NUCLEOTIDE SEQUENCE [GENOMIC DNA]</scope>
    <scope>FUNCTION</scope>
    <source>
        <strain>DSM 9455 / PER-K23</strain>
    </source>
</reference>
<keyword id="KW-1003">Cell membrane</keyword>
<keyword id="KW-0472">Membrane</keyword>
<keyword id="KW-0812">Transmembrane</keyword>
<keyword id="KW-1133">Transmembrane helix</keyword>
<sequence>MNIYDVLIWMALGMTALLIQYGIWRYLKGKGKDTIPLQICGFLANFFFIFALAWGYSSFSEREYQAIGMGFIFFGGTALIPAIITYRLANHPAKKIRESSDTISA</sequence>
<feature type="chain" id="PRO_0000453978" description="Probable tetrachloroethene reductive dehalogenase membrane anchor protein">
    <location>
        <begin position="1"/>
        <end position="105"/>
    </location>
</feature>
<feature type="transmembrane region" description="Helical" evidence="1">
    <location>
        <begin position="3"/>
        <end position="23"/>
    </location>
</feature>
<feature type="transmembrane region" description="Helical" evidence="1">
    <location>
        <begin position="35"/>
        <end position="55"/>
    </location>
</feature>
<feature type="transmembrane region" description="Helical" evidence="1">
    <location>
        <begin position="66"/>
        <end position="86"/>
    </location>
</feature>
<organism>
    <name type="scientific">Dehalobacter restrictus (strain DSM 9455 / PER-K23)</name>
    <dbReference type="NCBI Taxonomy" id="871738"/>
    <lineage>
        <taxon>Bacteria</taxon>
        <taxon>Bacillati</taxon>
        <taxon>Bacillota</taxon>
        <taxon>Clostridia</taxon>
        <taxon>Eubacteriales</taxon>
        <taxon>Desulfitobacteriaceae</taxon>
        <taxon>Dehalobacter</taxon>
    </lineage>
</organism>
<protein>
    <recommendedName>
        <fullName evidence="3">Probable tetrachloroethene reductive dehalogenase membrane anchor protein</fullName>
    </recommendedName>
</protein>
<gene>
    <name evidence="2" type="primary">pceB</name>
</gene>